<sequence length="432" mass="47728">MRPWALAVTRWPPSAPVGQRRFSAGPGSTPGQLWGSPGLEGPLASPPARDERLPSQQPPSRPPHLPVEERRASAPAGGSPRMLHPATQQSPFMVDLHEQVHQGPVPLSYTVTTVTTQGFPLPTGQHIPGCSAQQLPACSVMFSGQHYPLCCLPPPLIQACTMQQLPVPYQAYPHLISSDHYILHPPPPAPPPQPTHMAPLGQFVSLQTQHPRMPLQRLDNDVDLRGDQPSLGSFTYSTSAPGPALSPSVPLHYLPHDPLHQELSFGVPYSHMMPRRLSTQRYRLQQPLPPPPPPPPPPPYYPSFLPYFLSMLPMSPTAMGPTISLDLDVDDVEMENYEALLNLAERLGDAKPRGLTKADIEQLPSYRFNPDSHQSEQTLCVVCFSDFEARQLLRVLPCNHEFHTKCVDKWLKANRTCPICRADASEVPREAE</sequence>
<accession>Q7L0R7</accession>
<accession>B4DYE0</accession>
<accession>Q8ND05</accession>
<accession>Q9UPQ2</accession>
<gene>
    <name type="primary">RNF44</name>
    <name type="synonym">KIAA1100</name>
</gene>
<keyword id="KW-0025">Alternative splicing</keyword>
<keyword id="KW-0479">Metal-binding</keyword>
<keyword id="KW-1267">Proteomics identification</keyword>
<keyword id="KW-1185">Reference proteome</keyword>
<keyword id="KW-0862">Zinc</keyword>
<keyword id="KW-0863">Zinc-finger</keyword>
<evidence type="ECO:0000255" key="1">
    <source>
        <dbReference type="PROSITE-ProRule" id="PRU00175"/>
    </source>
</evidence>
<evidence type="ECO:0000256" key="2">
    <source>
        <dbReference type="SAM" id="MobiDB-lite"/>
    </source>
</evidence>
<evidence type="ECO:0000303" key="3">
    <source>
    </source>
</evidence>
<evidence type="ECO:0000305" key="4"/>
<reference key="1">
    <citation type="journal article" date="1999" name="DNA Res.">
        <title>Prediction of the coding sequences of unidentified human genes. XIV. The complete sequences of 100 new cDNA clones from brain which code for large proteins in vitro.</title>
        <authorList>
            <person name="Kikuno R."/>
            <person name="Nagase T."/>
            <person name="Ishikawa K."/>
            <person name="Hirosawa M."/>
            <person name="Miyajima N."/>
            <person name="Tanaka A."/>
            <person name="Kotani H."/>
            <person name="Nomura N."/>
            <person name="Ohara O."/>
        </authorList>
    </citation>
    <scope>NUCLEOTIDE SEQUENCE [LARGE SCALE MRNA] (ISOFORM 1)</scope>
    <source>
        <tissue>Brain</tissue>
    </source>
</reference>
<reference key="2">
    <citation type="journal article" date="2004" name="Nat. Genet.">
        <title>Complete sequencing and characterization of 21,243 full-length human cDNAs.</title>
        <authorList>
            <person name="Ota T."/>
            <person name="Suzuki Y."/>
            <person name="Nishikawa T."/>
            <person name="Otsuki T."/>
            <person name="Sugiyama T."/>
            <person name="Irie R."/>
            <person name="Wakamatsu A."/>
            <person name="Hayashi K."/>
            <person name="Sato H."/>
            <person name="Nagai K."/>
            <person name="Kimura K."/>
            <person name="Makita H."/>
            <person name="Sekine M."/>
            <person name="Obayashi M."/>
            <person name="Nishi T."/>
            <person name="Shibahara T."/>
            <person name="Tanaka T."/>
            <person name="Ishii S."/>
            <person name="Yamamoto J."/>
            <person name="Saito K."/>
            <person name="Kawai Y."/>
            <person name="Isono Y."/>
            <person name="Nakamura Y."/>
            <person name="Nagahari K."/>
            <person name="Murakami K."/>
            <person name="Yasuda T."/>
            <person name="Iwayanagi T."/>
            <person name="Wagatsuma M."/>
            <person name="Shiratori A."/>
            <person name="Sudo H."/>
            <person name="Hosoiri T."/>
            <person name="Kaku Y."/>
            <person name="Kodaira H."/>
            <person name="Kondo H."/>
            <person name="Sugawara M."/>
            <person name="Takahashi M."/>
            <person name="Kanda K."/>
            <person name="Yokoi T."/>
            <person name="Furuya T."/>
            <person name="Kikkawa E."/>
            <person name="Omura Y."/>
            <person name="Abe K."/>
            <person name="Kamihara K."/>
            <person name="Katsuta N."/>
            <person name="Sato K."/>
            <person name="Tanikawa M."/>
            <person name="Yamazaki M."/>
            <person name="Ninomiya K."/>
            <person name="Ishibashi T."/>
            <person name="Yamashita H."/>
            <person name="Murakawa K."/>
            <person name="Fujimori K."/>
            <person name="Tanai H."/>
            <person name="Kimata M."/>
            <person name="Watanabe M."/>
            <person name="Hiraoka S."/>
            <person name="Chiba Y."/>
            <person name="Ishida S."/>
            <person name="Ono Y."/>
            <person name="Takiguchi S."/>
            <person name="Watanabe S."/>
            <person name="Yosida M."/>
            <person name="Hotuta T."/>
            <person name="Kusano J."/>
            <person name="Kanehori K."/>
            <person name="Takahashi-Fujii A."/>
            <person name="Hara H."/>
            <person name="Tanase T.-O."/>
            <person name="Nomura Y."/>
            <person name="Togiya S."/>
            <person name="Komai F."/>
            <person name="Hara R."/>
            <person name="Takeuchi K."/>
            <person name="Arita M."/>
            <person name="Imose N."/>
            <person name="Musashino K."/>
            <person name="Yuuki H."/>
            <person name="Oshima A."/>
            <person name="Sasaki N."/>
            <person name="Aotsuka S."/>
            <person name="Yoshikawa Y."/>
            <person name="Matsunawa H."/>
            <person name="Ichihara T."/>
            <person name="Shiohata N."/>
            <person name="Sano S."/>
            <person name="Moriya S."/>
            <person name="Momiyama H."/>
            <person name="Satoh N."/>
            <person name="Takami S."/>
            <person name="Terashima Y."/>
            <person name="Suzuki O."/>
            <person name="Nakagawa S."/>
            <person name="Senoh A."/>
            <person name="Mizoguchi H."/>
            <person name="Goto Y."/>
            <person name="Shimizu F."/>
            <person name="Wakebe H."/>
            <person name="Hishigaki H."/>
            <person name="Watanabe T."/>
            <person name="Sugiyama A."/>
            <person name="Takemoto M."/>
            <person name="Kawakami B."/>
            <person name="Yamazaki M."/>
            <person name="Watanabe K."/>
            <person name="Kumagai A."/>
            <person name="Itakura S."/>
            <person name="Fukuzumi Y."/>
            <person name="Fujimori Y."/>
            <person name="Komiyama M."/>
            <person name="Tashiro H."/>
            <person name="Tanigami A."/>
            <person name="Fujiwara T."/>
            <person name="Ono T."/>
            <person name="Yamada K."/>
            <person name="Fujii Y."/>
            <person name="Ozaki K."/>
            <person name="Hirao M."/>
            <person name="Ohmori Y."/>
            <person name="Kawabata A."/>
            <person name="Hikiji T."/>
            <person name="Kobatake N."/>
            <person name="Inagaki H."/>
            <person name="Ikema Y."/>
            <person name="Okamoto S."/>
            <person name="Okitani R."/>
            <person name="Kawakami T."/>
            <person name="Noguchi S."/>
            <person name="Itoh T."/>
            <person name="Shigeta K."/>
            <person name="Senba T."/>
            <person name="Matsumura K."/>
            <person name="Nakajima Y."/>
            <person name="Mizuno T."/>
            <person name="Morinaga M."/>
            <person name="Sasaki M."/>
            <person name="Togashi T."/>
            <person name="Oyama M."/>
            <person name="Hata H."/>
            <person name="Watanabe M."/>
            <person name="Komatsu T."/>
            <person name="Mizushima-Sugano J."/>
            <person name="Satoh T."/>
            <person name="Shirai Y."/>
            <person name="Takahashi Y."/>
            <person name="Nakagawa K."/>
            <person name="Okumura K."/>
            <person name="Nagase T."/>
            <person name="Nomura N."/>
            <person name="Kikuchi H."/>
            <person name="Masuho Y."/>
            <person name="Yamashita R."/>
            <person name="Nakai K."/>
            <person name="Yada T."/>
            <person name="Nakamura Y."/>
            <person name="Ohara O."/>
            <person name="Isogai T."/>
            <person name="Sugano S."/>
        </authorList>
    </citation>
    <scope>NUCLEOTIDE SEQUENCE [LARGE SCALE MRNA] (ISOFORM 2)</scope>
    <source>
        <tissue>Testis</tissue>
    </source>
</reference>
<reference key="3">
    <citation type="journal article" date="2004" name="Nature">
        <title>The DNA sequence and comparative analysis of human chromosome 5.</title>
        <authorList>
            <person name="Schmutz J."/>
            <person name="Martin J."/>
            <person name="Terry A."/>
            <person name="Couronne O."/>
            <person name="Grimwood J."/>
            <person name="Lowry S."/>
            <person name="Gordon L.A."/>
            <person name="Scott D."/>
            <person name="Xie G."/>
            <person name="Huang W."/>
            <person name="Hellsten U."/>
            <person name="Tran-Gyamfi M."/>
            <person name="She X."/>
            <person name="Prabhakar S."/>
            <person name="Aerts A."/>
            <person name="Altherr M."/>
            <person name="Bajorek E."/>
            <person name="Black S."/>
            <person name="Branscomb E."/>
            <person name="Caoile C."/>
            <person name="Challacombe J.F."/>
            <person name="Chan Y.M."/>
            <person name="Denys M."/>
            <person name="Detter J.C."/>
            <person name="Escobar J."/>
            <person name="Flowers D."/>
            <person name="Fotopulos D."/>
            <person name="Glavina T."/>
            <person name="Gomez M."/>
            <person name="Gonzales E."/>
            <person name="Goodstein D."/>
            <person name="Grigoriev I."/>
            <person name="Groza M."/>
            <person name="Hammon N."/>
            <person name="Hawkins T."/>
            <person name="Haydu L."/>
            <person name="Israni S."/>
            <person name="Jett J."/>
            <person name="Kadner K."/>
            <person name="Kimball H."/>
            <person name="Kobayashi A."/>
            <person name="Lopez F."/>
            <person name="Lou Y."/>
            <person name="Martinez D."/>
            <person name="Medina C."/>
            <person name="Morgan J."/>
            <person name="Nandkeshwar R."/>
            <person name="Noonan J.P."/>
            <person name="Pitluck S."/>
            <person name="Pollard M."/>
            <person name="Predki P."/>
            <person name="Priest J."/>
            <person name="Ramirez L."/>
            <person name="Retterer J."/>
            <person name="Rodriguez A."/>
            <person name="Rogers S."/>
            <person name="Salamov A."/>
            <person name="Salazar A."/>
            <person name="Thayer N."/>
            <person name="Tice H."/>
            <person name="Tsai M."/>
            <person name="Ustaszewska A."/>
            <person name="Vo N."/>
            <person name="Wheeler J."/>
            <person name="Wu K."/>
            <person name="Yang J."/>
            <person name="Dickson M."/>
            <person name="Cheng J.-F."/>
            <person name="Eichler E.E."/>
            <person name="Olsen A."/>
            <person name="Pennacchio L.A."/>
            <person name="Rokhsar D.S."/>
            <person name="Richardson P."/>
            <person name="Lucas S.M."/>
            <person name="Myers R.M."/>
            <person name="Rubin E.M."/>
        </authorList>
    </citation>
    <scope>NUCLEOTIDE SEQUENCE [LARGE SCALE GENOMIC DNA]</scope>
</reference>
<reference key="4">
    <citation type="journal article" date="2004" name="Genome Res.">
        <title>The status, quality, and expansion of the NIH full-length cDNA project: the Mammalian Gene Collection (MGC).</title>
        <authorList>
            <consortium name="The MGC Project Team"/>
        </authorList>
    </citation>
    <scope>NUCLEOTIDE SEQUENCE [LARGE SCALE MRNA] (ISOFORM 1)</scope>
    <source>
        <tissue>Placenta</tissue>
        <tissue>Uterus</tissue>
    </source>
</reference>
<reference key="5">
    <citation type="journal article" date="2007" name="BMC Genomics">
        <title>The full-ORF clone resource of the German cDNA consortium.</title>
        <authorList>
            <person name="Bechtel S."/>
            <person name="Rosenfelder H."/>
            <person name="Duda A."/>
            <person name="Schmidt C.P."/>
            <person name="Ernst U."/>
            <person name="Wellenreuther R."/>
            <person name="Mehrle A."/>
            <person name="Schuster C."/>
            <person name="Bahr A."/>
            <person name="Bloecker H."/>
            <person name="Heubner D."/>
            <person name="Hoerlein A."/>
            <person name="Michel G."/>
            <person name="Wedler H."/>
            <person name="Koehrer K."/>
            <person name="Ottenwaelder B."/>
            <person name="Poustka A."/>
            <person name="Wiemann S."/>
            <person name="Schupp I."/>
        </authorList>
    </citation>
    <scope>NUCLEOTIDE SEQUENCE [LARGE SCALE MRNA] OF 79-432 (ISOFORM 1)</scope>
    <source>
        <tissue>Testis</tissue>
    </source>
</reference>
<comment type="interaction">
    <interactant intactId="EBI-2845060">
        <id>Q7L0R7</id>
    </interactant>
    <interactant intactId="EBI-948603">
        <id>Q03989</id>
        <label>ARID5A</label>
    </interactant>
    <organismsDiffer>false</organismsDiffer>
    <experiments>3</experiments>
</comment>
<comment type="interaction">
    <interactant intactId="EBI-2845060">
        <id>Q7L0R7</id>
    </interactant>
    <interactant intactId="EBI-724310">
        <id>Q15038</id>
        <label>DAZAP2</label>
    </interactant>
    <organismsDiffer>false</organismsDiffer>
    <experiments>3</experiments>
</comment>
<comment type="interaction">
    <interactant intactId="EBI-2845060">
        <id>Q7L0R7</id>
    </interactant>
    <interactant intactId="EBI-12811111">
        <id>Q8IUB9</id>
        <label>KRTAP19-1</label>
    </interactant>
    <organismsDiffer>false</organismsDiffer>
    <experiments>3</experiments>
</comment>
<comment type="interaction">
    <interactant intactId="EBI-2845060">
        <id>Q7L0R7</id>
    </interactant>
    <interactant intactId="EBI-1048945">
        <id>Q3LI72</id>
        <label>KRTAP19-5</label>
    </interactant>
    <organismsDiffer>false</organismsDiffer>
    <experiments>3</experiments>
</comment>
<comment type="interaction">
    <interactant intactId="EBI-2845060">
        <id>Q7L0R7</id>
    </interactant>
    <interactant intactId="EBI-10241353">
        <id>Q3SYF9</id>
        <label>KRTAP19-7</label>
    </interactant>
    <organismsDiffer>false</organismsDiffer>
    <experiments>3</experiments>
</comment>
<comment type="interaction">
    <interactant intactId="EBI-2845060">
        <id>Q7L0R7</id>
    </interactant>
    <interactant intactId="EBI-18395721">
        <id>Q3LI59</id>
        <label>KRTAP21-2</label>
    </interactant>
    <organismsDiffer>false</organismsDiffer>
    <experiments>3</experiments>
</comment>
<comment type="interaction">
    <interactant intactId="EBI-2845060">
        <id>Q7L0R7</id>
    </interactant>
    <interactant intactId="EBI-9996449">
        <id>Q9BYR8</id>
        <label>KRTAP3-1</label>
    </interactant>
    <organismsDiffer>false</organismsDiffer>
    <experiments>3</experiments>
</comment>
<comment type="interaction">
    <interactant intactId="EBI-2845060">
        <id>Q7L0R7</id>
    </interactant>
    <interactant intactId="EBI-12813389">
        <id>Q8TDS5</id>
        <label>OXER1</label>
    </interactant>
    <organismsDiffer>false</organismsDiffer>
    <experiments>3</experiments>
</comment>
<comment type="interaction">
    <interactant intactId="EBI-2845060">
        <id>Q7L0R7</id>
    </interactant>
    <interactant intactId="EBI-743976">
        <id>Q96LM6</id>
        <label>SPMIP9</label>
    </interactant>
    <organismsDiffer>false</organismsDiffer>
    <experiments>3</experiments>
</comment>
<comment type="alternative products">
    <event type="alternative splicing"/>
    <isoform>
        <id>Q7L0R7-1</id>
        <name>1</name>
        <sequence type="displayed"/>
    </isoform>
    <isoform>
        <id>Q7L0R7-2</id>
        <name>2</name>
        <sequence type="described" ref="VSP_055432"/>
    </isoform>
</comment>
<comment type="sequence caution" evidence="4">
    <conflict type="erroneous initiation">
        <sequence resource="EMBL-CDS" id="BAA83052"/>
    </conflict>
</comment>
<protein>
    <recommendedName>
        <fullName>RING finger protein 44</fullName>
    </recommendedName>
</protein>
<proteinExistence type="evidence at protein level"/>
<organism>
    <name type="scientific">Homo sapiens</name>
    <name type="common">Human</name>
    <dbReference type="NCBI Taxonomy" id="9606"/>
    <lineage>
        <taxon>Eukaryota</taxon>
        <taxon>Metazoa</taxon>
        <taxon>Chordata</taxon>
        <taxon>Craniata</taxon>
        <taxon>Vertebrata</taxon>
        <taxon>Euteleostomi</taxon>
        <taxon>Mammalia</taxon>
        <taxon>Eutheria</taxon>
        <taxon>Euarchontoglires</taxon>
        <taxon>Primates</taxon>
        <taxon>Haplorrhini</taxon>
        <taxon>Catarrhini</taxon>
        <taxon>Hominidae</taxon>
        <taxon>Homo</taxon>
    </lineage>
</organism>
<name>RNF44_HUMAN</name>
<dbReference type="EMBL" id="AB029023">
    <property type="protein sequence ID" value="BAA83052.2"/>
    <property type="status" value="ALT_INIT"/>
    <property type="molecule type" value="mRNA"/>
</dbReference>
<dbReference type="EMBL" id="AK302385">
    <property type="protein sequence ID" value="BAG63702.1"/>
    <property type="molecule type" value="mRNA"/>
</dbReference>
<dbReference type="EMBL" id="AC010316">
    <property type="status" value="NOT_ANNOTATED_CDS"/>
    <property type="molecule type" value="Genomic_DNA"/>
</dbReference>
<dbReference type="EMBL" id="AC091934">
    <property type="status" value="NOT_ANNOTATED_CDS"/>
    <property type="molecule type" value="Genomic_DNA"/>
</dbReference>
<dbReference type="EMBL" id="BC039833">
    <property type="protein sequence ID" value="AAH39833.1"/>
    <property type="molecule type" value="mRNA"/>
</dbReference>
<dbReference type="EMBL" id="BC063297">
    <property type="protein sequence ID" value="AAH63297.1"/>
    <property type="molecule type" value="mRNA"/>
</dbReference>
<dbReference type="EMBL" id="AL834489">
    <property type="protein sequence ID" value="CAD39147.2"/>
    <property type="molecule type" value="mRNA"/>
</dbReference>
<dbReference type="CCDS" id="CCDS4404.1">
    <molecule id="Q7L0R7-1"/>
</dbReference>
<dbReference type="RefSeq" id="NP_055716.1">
    <molecule id="Q7L0R7-1"/>
    <property type="nucleotide sequence ID" value="NM_014901.5"/>
</dbReference>
<dbReference type="RefSeq" id="XP_005265897.1">
    <molecule id="Q7L0R7-1"/>
    <property type="nucleotide sequence ID" value="XM_005265840.3"/>
</dbReference>
<dbReference type="RefSeq" id="XP_005265898.1">
    <molecule id="Q7L0R7-1"/>
    <property type="nucleotide sequence ID" value="XM_005265841.5"/>
</dbReference>
<dbReference type="RefSeq" id="XP_005265899.1">
    <property type="nucleotide sequence ID" value="XM_005265842.4"/>
</dbReference>
<dbReference type="RefSeq" id="XP_005265900.1">
    <molecule id="Q7L0R7-2"/>
    <property type="nucleotide sequence ID" value="XM_005265843.3"/>
</dbReference>
<dbReference type="RefSeq" id="XP_005265901.1">
    <molecule id="Q7L0R7-2"/>
    <property type="nucleotide sequence ID" value="XM_005265844.4"/>
</dbReference>
<dbReference type="RefSeq" id="XP_005265902.1">
    <property type="nucleotide sequence ID" value="XM_005265845.4"/>
</dbReference>
<dbReference type="RefSeq" id="XP_011532768.1">
    <molecule id="Q7L0R7-1"/>
    <property type="nucleotide sequence ID" value="XM_011534466.4"/>
</dbReference>
<dbReference type="RefSeq" id="XP_011532769.1">
    <property type="nucleotide sequence ID" value="XM_011534467.2"/>
</dbReference>
<dbReference type="RefSeq" id="XP_047272905.1">
    <molecule id="Q7L0R7-1"/>
    <property type="nucleotide sequence ID" value="XM_047416949.1"/>
</dbReference>
<dbReference type="RefSeq" id="XP_054208051.1">
    <molecule id="Q7L0R7-1"/>
    <property type="nucleotide sequence ID" value="XM_054352076.1"/>
</dbReference>
<dbReference type="RefSeq" id="XP_054208052.1">
    <molecule id="Q7L0R7-1"/>
    <property type="nucleotide sequence ID" value="XM_054352077.1"/>
</dbReference>
<dbReference type="RefSeq" id="XP_054208053.1">
    <molecule id="Q7L0R7-1"/>
    <property type="nucleotide sequence ID" value="XM_054352078.1"/>
</dbReference>
<dbReference type="RefSeq" id="XP_054208054.1">
    <molecule id="Q7L0R7-1"/>
    <property type="nucleotide sequence ID" value="XM_054352079.1"/>
</dbReference>
<dbReference type="RefSeq" id="XP_054208066.1">
    <molecule id="Q7L0R7-2"/>
    <property type="nucleotide sequence ID" value="XM_054352091.1"/>
</dbReference>
<dbReference type="RefSeq" id="XP_054208067.1">
    <molecule id="Q7L0R7-2"/>
    <property type="nucleotide sequence ID" value="XM_054352092.1"/>
</dbReference>
<dbReference type="SMR" id="Q7L0R7"/>
<dbReference type="BioGRID" id="116512">
    <property type="interactions" value="15"/>
</dbReference>
<dbReference type="FunCoup" id="Q7L0R7">
    <property type="interactions" value="1293"/>
</dbReference>
<dbReference type="IntAct" id="Q7L0R7">
    <property type="interactions" value="11"/>
</dbReference>
<dbReference type="STRING" id="9606.ENSP00000274811"/>
<dbReference type="GlyGen" id="Q7L0R7">
    <property type="glycosylation" value="1 site"/>
</dbReference>
<dbReference type="iPTMnet" id="Q7L0R7"/>
<dbReference type="PhosphoSitePlus" id="Q7L0R7"/>
<dbReference type="BioMuta" id="RNF44"/>
<dbReference type="DMDM" id="74758994"/>
<dbReference type="MassIVE" id="Q7L0R7"/>
<dbReference type="PaxDb" id="9606-ENSP00000274811"/>
<dbReference type="PeptideAtlas" id="Q7L0R7"/>
<dbReference type="ProteomicsDB" id="5519"/>
<dbReference type="ProteomicsDB" id="68736">
    <molecule id="Q7L0R7-1"/>
</dbReference>
<dbReference type="Antibodypedia" id="45996">
    <property type="antibodies" value="50 antibodies from 11 providers"/>
</dbReference>
<dbReference type="DNASU" id="22838"/>
<dbReference type="Ensembl" id="ENST00000274811.9">
    <molecule id="Q7L0R7-1"/>
    <property type="protein sequence ID" value="ENSP00000274811.4"/>
    <property type="gene ID" value="ENSG00000146083.12"/>
</dbReference>
<dbReference type="GeneID" id="22838"/>
<dbReference type="KEGG" id="hsa:22838"/>
<dbReference type="MANE-Select" id="ENST00000274811.9">
    <property type="protein sequence ID" value="ENSP00000274811.4"/>
    <property type="RefSeq nucleotide sequence ID" value="NM_014901.5"/>
    <property type="RefSeq protein sequence ID" value="NP_055716.1"/>
</dbReference>
<dbReference type="UCSC" id="uc003mek.2">
    <molecule id="Q7L0R7-1"/>
    <property type="organism name" value="human"/>
</dbReference>
<dbReference type="AGR" id="HGNC:19180"/>
<dbReference type="CTD" id="22838"/>
<dbReference type="DisGeNET" id="22838"/>
<dbReference type="GeneCards" id="RNF44"/>
<dbReference type="HGNC" id="HGNC:19180">
    <property type="gene designation" value="RNF44"/>
</dbReference>
<dbReference type="HPA" id="ENSG00000146083">
    <property type="expression patterns" value="Low tissue specificity"/>
</dbReference>
<dbReference type="MIM" id="619283">
    <property type="type" value="gene"/>
</dbReference>
<dbReference type="neXtProt" id="NX_Q7L0R7"/>
<dbReference type="OpenTargets" id="ENSG00000146083"/>
<dbReference type="PharmGKB" id="PA38819"/>
<dbReference type="VEuPathDB" id="HostDB:ENSG00000146083"/>
<dbReference type="eggNOG" id="KOG0800">
    <property type="taxonomic scope" value="Eukaryota"/>
</dbReference>
<dbReference type="GeneTree" id="ENSGT00940000158553"/>
<dbReference type="HOGENOM" id="CLU_024578_0_0_1"/>
<dbReference type="InParanoid" id="Q7L0R7"/>
<dbReference type="OMA" id="MSSEHFV"/>
<dbReference type="OrthoDB" id="8062037at2759"/>
<dbReference type="PAN-GO" id="Q7L0R7">
    <property type="GO annotations" value="2 GO annotations based on evolutionary models"/>
</dbReference>
<dbReference type="PhylomeDB" id="Q7L0R7"/>
<dbReference type="TreeFam" id="TF325756"/>
<dbReference type="PathwayCommons" id="Q7L0R7"/>
<dbReference type="SignaLink" id="Q7L0R7"/>
<dbReference type="SIGNOR" id="Q7L0R7"/>
<dbReference type="BioGRID-ORCS" id="22838">
    <property type="hits" value="7 hits in 1190 CRISPR screens"/>
</dbReference>
<dbReference type="ChiTaRS" id="RNF44">
    <property type="organism name" value="human"/>
</dbReference>
<dbReference type="GenomeRNAi" id="22838"/>
<dbReference type="Pharos" id="Q7L0R7">
    <property type="development level" value="Tdark"/>
</dbReference>
<dbReference type="PRO" id="PR:Q7L0R7"/>
<dbReference type="Proteomes" id="UP000005640">
    <property type="component" value="Chromosome 5"/>
</dbReference>
<dbReference type="RNAct" id="Q7L0R7">
    <property type="molecule type" value="protein"/>
</dbReference>
<dbReference type="Bgee" id="ENSG00000146083">
    <property type="expression patterns" value="Expressed in granulocyte and 201 other cell types or tissues"/>
</dbReference>
<dbReference type="ExpressionAtlas" id="Q7L0R7">
    <property type="expression patterns" value="baseline and differential"/>
</dbReference>
<dbReference type="GO" id="GO:0061630">
    <property type="term" value="F:ubiquitin protein ligase activity"/>
    <property type="evidence" value="ECO:0000318"/>
    <property type="project" value="GO_Central"/>
</dbReference>
<dbReference type="GO" id="GO:0008270">
    <property type="term" value="F:zinc ion binding"/>
    <property type="evidence" value="ECO:0007669"/>
    <property type="project" value="UniProtKB-KW"/>
</dbReference>
<dbReference type="GO" id="GO:0016567">
    <property type="term" value="P:protein ubiquitination"/>
    <property type="evidence" value="ECO:0000318"/>
    <property type="project" value="GO_Central"/>
</dbReference>
<dbReference type="CDD" id="cd16680">
    <property type="entry name" value="RING-H2_RNF44"/>
    <property type="match status" value="1"/>
</dbReference>
<dbReference type="FunFam" id="3.30.40.10:FF:000024">
    <property type="entry name" value="RING finger protein 44 isoform X1"/>
    <property type="match status" value="1"/>
</dbReference>
<dbReference type="Gene3D" id="3.30.40.10">
    <property type="entry name" value="Zinc/RING finger domain, C3HC4 (zinc finger)"/>
    <property type="match status" value="1"/>
</dbReference>
<dbReference type="InterPro" id="IPR001841">
    <property type="entry name" value="Znf_RING"/>
</dbReference>
<dbReference type="InterPro" id="IPR013083">
    <property type="entry name" value="Znf_RING/FYVE/PHD"/>
</dbReference>
<dbReference type="PANTHER" id="PTHR46171">
    <property type="entry name" value="GH10160P"/>
    <property type="match status" value="1"/>
</dbReference>
<dbReference type="PANTHER" id="PTHR46171:SF2">
    <property type="entry name" value="RING FINGER PROTEIN 44"/>
    <property type="match status" value="1"/>
</dbReference>
<dbReference type="Pfam" id="PF13639">
    <property type="entry name" value="zf-RING_2"/>
    <property type="match status" value="1"/>
</dbReference>
<dbReference type="SMART" id="SM00184">
    <property type="entry name" value="RING"/>
    <property type="match status" value="1"/>
</dbReference>
<dbReference type="SUPFAM" id="SSF57850">
    <property type="entry name" value="RING/U-box"/>
    <property type="match status" value="1"/>
</dbReference>
<dbReference type="PROSITE" id="PS50089">
    <property type="entry name" value="ZF_RING_2"/>
    <property type="match status" value="1"/>
</dbReference>
<feature type="chain" id="PRO_0000273413" description="RING finger protein 44">
    <location>
        <begin position="1"/>
        <end position="432"/>
    </location>
</feature>
<feature type="zinc finger region" description="RING-type; atypical" evidence="1">
    <location>
        <begin position="380"/>
        <end position="421"/>
    </location>
</feature>
<feature type="region of interest" description="Disordered" evidence="2">
    <location>
        <begin position="1"/>
        <end position="86"/>
    </location>
</feature>
<feature type="compositionally biased region" description="Pro residues" evidence="2">
    <location>
        <begin position="56"/>
        <end position="65"/>
    </location>
</feature>
<feature type="splice variant" id="VSP_055432" description="In isoform 2." evidence="3">
    <location>
        <begin position="1"/>
        <end position="81"/>
    </location>
</feature>